<sequence>MSVVIRLARAGTKKRPVYHVVVADSRFPRDGRFIERLGHFNPLLPKDSEARLKLDLDKVKAWVAKGAQPSDRVARFLDAAGVKKREARNNPEKAVPRKERKAAAEAAAKK</sequence>
<feature type="chain" id="PRO_0000243859" description="Small ribosomal subunit protein bS16">
    <location>
        <begin position="1"/>
        <end position="110"/>
    </location>
</feature>
<feature type="region of interest" description="Disordered" evidence="2">
    <location>
        <begin position="84"/>
        <end position="110"/>
    </location>
</feature>
<dbReference type="EMBL" id="CP000301">
    <property type="protein sequence ID" value="ABD85797.1"/>
    <property type="molecule type" value="Genomic_DNA"/>
</dbReference>
<dbReference type="SMR" id="Q21CT9"/>
<dbReference type="STRING" id="316056.RPC_0222"/>
<dbReference type="KEGG" id="rpc:RPC_0222"/>
<dbReference type="eggNOG" id="COG0228">
    <property type="taxonomic scope" value="Bacteria"/>
</dbReference>
<dbReference type="HOGENOM" id="CLU_100590_3_1_5"/>
<dbReference type="OrthoDB" id="9807878at2"/>
<dbReference type="GO" id="GO:0005737">
    <property type="term" value="C:cytoplasm"/>
    <property type="evidence" value="ECO:0007669"/>
    <property type="project" value="UniProtKB-ARBA"/>
</dbReference>
<dbReference type="GO" id="GO:0015935">
    <property type="term" value="C:small ribosomal subunit"/>
    <property type="evidence" value="ECO:0007669"/>
    <property type="project" value="TreeGrafter"/>
</dbReference>
<dbReference type="GO" id="GO:0003735">
    <property type="term" value="F:structural constituent of ribosome"/>
    <property type="evidence" value="ECO:0007669"/>
    <property type="project" value="InterPro"/>
</dbReference>
<dbReference type="GO" id="GO:0006412">
    <property type="term" value="P:translation"/>
    <property type="evidence" value="ECO:0007669"/>
    <property type="project" value="UniProtKB-UniRule"/>
</dbReference>
<dbReference type="FunFam" id="3.30.1320.10:FF:000008">
    <property type="entry name" value="30S ribosomal protein S16"/>
    <property type="match status" value="1"/>
</dbReference>
<dbReference type="Gene3D" id="3.30.1320.10">
    <property type="match status" value="1"/>
</dbReference>
<dbReference type="HAMAP" id="MF_00385">
    <property type="entry name" value="Ribosomal_bS16"/>
    <property type="match status" value="1"/>
</dbReference>
<dbReference type="InterPro" id="IPR000307">
    <property type="entry name" value="Ribosomal_bS16"/>
</dbReference>
<dbReference type="InterPro" id="IPR023803">
    <property type="entry name" value="Ribosomal_bS16_dom_sf"/>
</dbReference>
<dbReference type="NCBIfam" id="TIGR00002">
    <property type="entry name" value="S16"/>
    <property type="match status" value="1"/>
</dbReference>
<dbReference type="PANTHER" id="PTHR12919">
    <property type="entry name" value="30S RIBOSOMAL PROTEIN S16"/>
    <property type="match status" value="1"/>
</dbReference>
<dbReference type="PANTHER" id="PTHR12919:SF20">
    <property type="entry name" value="SMALL RIBOSOMAL SUBUNIT PROTEIN BS16M"/>
    <property type="match status" value="1"/>
</dbReference>
<dbReference type="Pfam" id="PF00886">
    <property type="entry name" value="Ribosomal_S16"/>
    <property type="match status" value="1"/>
</dbReference>
<dbReference type="SUPFAM" id="SSF54565">
    <property type="entry name" value="Ribosomal protein S16"/>
    <property type="match status" value="1"/>
</dbReference>
<protein>
    <recommendedName>
        <fullName evidence="1">Small ribosomal subunit protein bS16</fullName>
    </recommendedName>
    <alternativeName>
        <fullName evidence="3">30S ribosomal protein S16</fullName>
    </alternativeName>
</protein>
<proteinExistence type="inferred from homology"/>
<evidence type="ECO:0000255" key="1">
    <source>
        <dbReference type="HAMAP-Rule" id="MF_00385"/>
    </source>
</evidence>
<evidence type="ECO:0000256" key="2">
    <source>
        <dbReference type="SAM" id="MobiDB-lite"/>
    </source>
</evidence>
<evidence type="ECO:0000305" key="3"/>
<accession>Q21CT9</accession>
<keyword id="KW-0687">Ribonucleoprotein</keyword>
<keyword id="KW-0689">Ribosomal protein</keyword>
<comment type="similarity">
    <text evidence="1">Belongs to the bacterial ribosomal protein bS16 family.</text>
</comment>
<name>RS16_RHOPB</name>
<gene>
    <name evidence="1" type="primary">rpsP</name>
    <name type="ordered locus">RPC_0222</name>
</gene>
<organism>
    <name type="scientific">Rhodopseudomonas palustris (strain BisB18)</name>
    <dbReference type="NCBI Taxonomy" id="316056"/>
    <lineage>
        <taxon>Bacteria</taxon>
        <taxon>Pseudomonadati</taxon>
        <taxon>Pseudomonadota</taxon>
        <taxon>Alphaproteobacteria</taxon>
        <taxon>Hyphomicrobiales</taxon>
        <taxon>Nitrobacteraceae</taxon>
        <taxon>Rhodopseudomonas</taxon>
    </lineage>
</organism>
<reference key="1">
    <citation type="submission" date="2006-03" db="EMBL/GenBank/DDBJ databases">
        <title>Complete sequence of Rhodopseudomonas palustris BisB18.</title>
        <authorList>
            <consortium name="US DOE Joint Genome Institute"/>
            <person name="Copeland A."/>
            <person name="Lucas S."/>
            <person name="Lapidus A."/>
            <person name="Barry K."/>
            <person name="Detter J.C."/>
            <person name="Glavina del Rio T."/>
            <person name="Hammon N."/>
            <person name="Israni S."/>
            <person name="Dalin E."/>
            <person name="Tice H."/>
            <person name="Pitluck S."/>
            <person name="Chain P."/>
            <person name="Malfatti S."/>
            <person name="Shin M."/>
            <person name="Vergez L."/>
            <person name="Schmutz J."/>
            <person name="Larimer F."/>
            <person name="Land M."/>
            <person name="Hauser L."/>
            <person name="Pelletier D.A."/>
            <person name="Kyrpides N."/>
            <person name="Anderson I."/>
            <person name="Oda Y."/>
            <person name="Harwood C.S."/>
            <person name="Richardson P."/>
        </authorList>
    </citation>
    <scope>NUCLEOTIDE SEQUENCE [LARGE SCALE GENOMIC DNA]</scope>
    <source>
        <strain>BisB18</strain>
    </source>
</reference>